<dbReference type="EC" id="1.1.1.94" evidence="1"/>
<dbReference type="EMBL" id="BA000022">
    <property type="protein sequence ID" value="BAA17053.1"/>
    <property type="status" value="ALT_INIT"/>
    <property type="molecule type" value="Genomic_DNA"/>
</dbReference>
<dbReference type="PIR" id="S75139">
    <property type="entry name" value="S75139"/>
</dbReference>
<dbReference type="SMR" id="P73033"/>
<dbReference type="FunCoup" id="P73033">
    <property type="interactions" value="388"/>
</dbReference>
<dbReference type="IntAct" id="P73033">
    <property type="interactions" value="1"/>
</dbReference>
<dbReference type="STRING" id="1148.gene:10497914"/>
<dbReference type="PaxDb" id="1148-1652129"/>
<dbReference type="EnsemblBacteria" id="BAA17053">
    <property type="protein sequence ID" value="BAA17053"/>
    <property type="gene ID" value="BAA17053"/>
</dbReference>
<dbReference type="KEGG" id="syn:slr1755"/>
<dbReference type="eggNOG" id="COG0240">
    <property type="taxonomic scope" value="Bacteria"/>
</dbReference>
<dbReference type="InParanoid" id="P73033"/>
<dbReference type="PhylomeDB" id="P73033"/>
<dbReference type="BioCyc" id="MetaCyc:MONOMER-20261"/>
<dbReference type="UniPathway" id="UPA00940"/>
<dbReference type="Proteomes" id="UP000001425">
    <property type="component" value="Chromosome"/>
</dbReference>
<dbReference type="GO" id="GO:0005829">
    <property type="term" value="C:cytosol"/>
    <property type="evidence" value="ECO:0000318"/>
    <property type="project" value="GO_Central"/>
</dbReference>
<dbReference type="GO" id="GO:0047952">
    <property type="term" value="F:glycerol-3-phosphate dehydrogenase [NAD(P)+] activity"/>
    <property type="evidence" value="ECO:0000318"/>
    <property type="project" value="GO_Central"/>
</dbReference>
<dbReference type="GO" id="GO:0051287">
    <property type="term" value="F:NAD binding"/>
    <property type="evidence" value="ECO:0007669"/>
    <property type="project" value="InterPro"/>
</dbReference>
<dbReference type="GO" id="GO:0005975">
    <property type="term" value="P:carbohydrate metabolic process"/>
    <property type="evidence" value="ECO:0007669"/>
    <property type="project" value="InterPro"/>
</dbReference>
<dbReference type="GO" id="GO:0046167">
    <property type="term" value="P:glycerol-3-phosphate biosynthetic process"/>
    <property type="evidence" value="ECO:0007669"/>
    <property type="project" value="UniProtKB-UniRule"/>
</dbReference>
<dbReference type="GO" id="GO:0046168">
    <property type="term" value="P:glycerol-3-phosphate catabolic process"/>
    <property type="evidence" value="ECO:0007669"/>
    <property type="project" value="InterPro"/>
</dbReference>
<dbReference type="GO" id="GO:0006072">
    <property type="term" value="P:glycerol-3-phosphate metabolic process"/>
    <property type="evidence" value="ECO:0000318"/>
    <property type="project" value="GO_Central"/>
</dbReference>
<dbReference type="GO" id="GO:0006650">
    <property type="term" value="P:glycerophospholipid metabolic process"/>
    <property type="evidence" value="ECO:0007669"/>
    <property type="project" value="UniProtKB-UniRule"/>
</dbReference>
<dbReference type="GO" id="GO:0008654">
    <property type="term" value="P:phospholipid biosynthetic process"/>
    <property type="evidence" value="ECO:0007669"/>
    <property type="project" value="UniProtKB-KW"/>
</dbReference>
<dbReference type="FunFam" id="1.10.1040.10:FF:000001">
    <property type="entry name" value="Glycerol-3-phosphate dehydrogenase [NAD(P)+]"/>
    <property type="match status" value="1"/>
</dbReference>
<dbReference type="FunFam" id="3.40.50.720:FF:001174">
    <property type="entry name" value="Glycerol-3-phosphate dehydrogenase [NAD(P)+]"/>
    <property type="match status" value="1"/>
</dbReference>
<dbReference type="Gene3D" id="1.10.1040.10">
    <property type="entry name" value="N-(1-d-carboxylethyl)-l-norvaline Dehydrogenase, domain 2"/>
    <property type="match status" value="1"/>
</dbReference>
<dbReference type="Gene3D" id="3.40.50.720">
    <property type="entry name" value="NAD(P)-binding Rossmann-like Domain"/>
    <property type="match status" value="2"/>
</dbReference>
<dbReference type="HAMAP" id="MF_00394">
    <property type="entry name" value="NAD_Glyc3P_dehydrog"/>
    <property type="match status" value="1"/>
</dbReference>
<dbReference type="InterPro" id="IPR008927">
    <property type="entry name" value="6-PGluconate_DH-like_C_sf"/>
</dbReference>
<dbReference type="InterPro" id="IPR013328">
    <property type="entry name" value="6PGD_dom2"/>
</dbReference>
<dbReference type="InterPro" id="IPR006168">
    <property type="entry name" value="G3P_DH_NAD-dep"/>
</dbReference>
<dbReference type="InterPro" id="IPR006109">
    <property type="entry name" value="G3P_DH_NAD-dep_C"/>
</dbReference>
<dbReference type="InterPro" id="IPR011128">
    <property type="entry name" value="G3P_DH_NAD-dep_N"/>
</dbReference>
<dbReference type="InterPro" id="IPR036291">
    <property type="entry name" value="NAD(P)-bd_dom_sf"/>
</dbReference>
<dbReference type="NCBIfam" id="NF000940">
    <property type="entry name" value="PRK00094.1-2"/>
    <property type="match status" value="1"/>
</dbReference>
<dbReference type="NCBIfam" id="NF000942">
    <property type="entry name" value="PRK00094.1-4"/>
    <property type="match status" value="1"/>
</dbReference>
<dbReference type="NCBIfam" id="NF011212">
    <property type="entry name" value="PRK14619.1"/>
    <property type="match status" value="1"/>
</dbReference>
<dbReference type="PANTHER" id="PTHR11728">
    <property type="entry name" value="GLYCEROL-3-PHOSPHATE DEHYDROGENASE"/>
    <property type="match status" value="1"/>
</dbReference>
<dbReference type="PANTHER" id="PTHR11728:SF1">
    <property type="entry name" value="GLYCEROL-3-PHOSPHATE DEHYDROGENASE [NAD(+)] 2, CHLOROPLASTIC"/>
    <property type="match status" value="1"/>
</dbReference>
<dbReference type="Pfam" id="PF07479">
    <property type="entry name" value="NAD_Gly3P_dh_C"/>
    <property type="match status" value="1"/>
</dbReference>
<dbReference type="Pfam" id="PF01210">
    <property type="entry name" value="NAD_Gly3P_dh_N"/>
    <property type="match status" value="2"/>
</dbReference>
<dbReference type="PIRSF" id="PIRSF000114">
    <property type="entry name" value="Glycerol-3-P_dh"/>
    <property type="match status" value="1"/>
</dbReference>
<dbReference type="SUPFAM" id="SSF48179">
    <property type="entry name" value="6-phosphogluconate dehydrogenase C-terminal domain-like"/>
    <property type="match status" value="1"/>
</dbReference>
<dbReference type="SUPFAM" id="SSF51735">
    <property type="entry name" value="NAD(P)-binding Rossmann-fold domains"/>
    <property type="match status" value="1"/>
</dbReference>
<dbReference type="PROSITE" id="PS00957">
    <property type="entry name" value="NAD_G3PDH"/>
    <property type="match status" value="1"/>
</dbReference>
<proteinExistence type="inferred from homology"/>
<evidence type="ECO:0000255" key="1">
    <source>
        <dbReference type="HAMAP-Rule" id="MF_00394"/>
    </source>
</evidence>
<evidence type="ECO:0000305" key="2"/>
<feature type="chain" id="PRO_0000138047" description="Glycerol-3-phosphate dehydrogenase [NAD(P)+]">
    <location>
        <begin position="1"/>
        <end position="317"/>
    </location>
</feature>
<feature type="active site" description="Proton acceptor" evidence="1">
    <location>
        <position position="171"/>
    </location>
</feature>
<feature type="binding site" evidence="1">
    <location>
        <position position="20"/>
    </location>
    <ligand>
        <name>NADPH</name>
        <dbReference type="ChEBI" id="CHEBI:57783"/>
    </ligand>
</feature>
<feature type="binding site" evidence="1">
    <location>
        <position position="40"/>
    </location>
    <ligand>
        <name>NADPH</name>
        <dbReference type="ChEBI" id="CHEBI:57783"/>
    </ligand>
</feature>
<feature type="binding site" evidence="1">
    <location>
        <position position="41"/>
    </location>
    <ligand>
        <name>NADPH</name>
        <dbReference type="ChEBI" id="CHEBI:57783"/>
    </ligand>
</feature>
<feature type="binding site" evidence="1">
    <location>
        <position position="88"/>
    </location>
    <ligand>
        <name>NADPH</name>
        <dbReference type="ChEBI" id="CHEBI:57783"/>
    </ligand>
</feature>
<feature type="binding site" evidence="1">
    <location>
        <position position="88"/>
    </location>
    <ligand>
        <name>sn-glycerol 3-phosphate</name>
        <dbReference type="ChEBI" id="CHEBI:57597"/>
    </ligand>
</feature>
<feature type="binding site" evidence="1">
    <location>
        <position position="116"/>
    </location>
    <ligand>
        <name>sn-glycerol 3-phosphate</name>
        <dbReference type="ChEBI" id="CHEBI:57597"/>
    </ligand>
</feature>
<feature type="binding site" evidence="1">
    <location>
        <position position="120"/>
    </location>
    <ligand>
        <name>NADPH</name>
        <dbReference type="ChEBI" id="CHEBI:57783"/>
    </ligand>
</feature>
<feature type="binding site" evidence="1">
    <location>
        <position position="171"/>
    </location>
    <ligand>
        <name>sn-glycerol 3-phosphate</name>
        <dbReference type="ChEBI" id="CHEBI:57597"/>
    </ligand>
</feature>
<feature type="binding site" evidence="1">
    <location>
        <position position="224"/>
    </location>
    <ligand>
        <name>sn-glycerol 3-phosphate</name>
        <dbReference type="ChEBI" id="CHEBI:57597"/>
    </ligand>
</feature>
<feature type="binding site" evidence="1">
    <location>
        <position position="234"/>
    </location>
    <ligand>
        <name>sn-glycerol 3-phosphate</name>
        <dbReference type="ChEBI" id="CHEBI:57597"/>
    </ligand>
</feature>
<feature type="binding site" evidence="1">
    <location>
        <position position="235"/>
    </location>
    <ligand>
        <name>NADPH</name>
        <dbReference type="ChEBI" id="CHEBI:57783"/>
    </ligand>
</feature>
<feature type="binding site" evidence="1">
    <location>
        <position position="235"/>
    </location>
    <ligand>
        <name>sn-glycerol 3-phosphate</name>
        <dbReference type="ChEBI" id="CHEBI:57597"/>
    </ligand>
</feature>
<feature type="binding site" evidence="1">
    <location>
        <position position="236"/>
    </location>
    <ligand>
        <name>sn-glycerol 3-phosphate</name>
        <dbReference type="ChEBI" id="CHEBI:57597"/>
    </ligand>
</feature>
<feature type="binding site" evidence="1">
    <location>
        <position position="261"/>
    </location>
    <ligand>
        <name>NADPH</name>
        <dbReference type="ChEBI" id="CHEBI:57783"/>
    </ligand>
</feature>
<keyword id="KW-0963">Cytoplasm</keyword>
<keyword id="KW-0444">Lipid biosynthesis</keyword>
<keyword id="KW-0443">Lipid metabolism</keyword>
<keyword id="KW-0520">NAD</keyword>
<keyword id="KW-0521">NADP</keyword>
<keyword id="KW-0547">Nucleotide-binding</keyword>
<keyword id="KW-0560">Oxidoreductase</keyword>
<keyword id="KW-0594">Phospholipid biosynthesis</keyword>
<keyword id="KW-1208">Phospholipid metabolism</keyword>
<keyword id="KW-1185">Reference proteome</keyword>
<name>GPDA_SYNY3</name>
<sequence length="317" mass="33511">MSFANADTPPQVVVLGAGAWGSSLAYVLNNNDIPTQVWSRRSPQSLESMVAGADVIVSAVSIKGVPSVAARLEAMDLQRRTILVTATKGLDPETMTTPSQIWQAALPSQPIAVLSGPNLSKEIDQGLPAATVVASSDQAAAEEIQTIFAADNFRVYTNNDPLGTELGGTLKNVMAIAVGVCEGLGLGTNAKSALITRALPEITRVGLHFGAQPDTFWGLAGLGDLLATCSSMLSRNYRVGYGLSKGQSLEEILANLGGTAEGVNTTDVLIKIANREKIAVPITRQVYRLLHGKITPPQAVEALMERELKAEFEDFDL</sequence>
<gene>
    <name evidence="1" type="primary">gpsA</name>
    <name type="ordered locus">slr1755</name>
</gene>
<comment type="function">
    <text evidence="1">Catalyzes the reduction of the glycolytic intermediate dihydroxyacetone phosphate (DHAP) to sn-glycerol 3-phosphate (G3P), the key precursor for phospholipid synthesis.</text>
</comment>
<comment type="catalytic activity">
    <reaction evidence="1">
        <text>sn-glycerol 3-phosphate + NAD(+) = dihydroxyacetone phosphate + NADH + H(+)</text>
        <dbReference type="Rhea" id="RHEA:11092"/>
        <dbReference type="ChEBI" id="CHEBI:15378"/>
        <dbReference type="ChEBI" id="CHEBI:57540"/>
        <dbReference type="ChEBI" id="CHEBI:57597"/>
        <dbReference type="ChEBI" id="CHEBI:57642"/>
        <dbReference type="ChEBI" id="CHEBI:57945"/>
        <dbReference type="EC" id="1.1.1.94"/>
    </reaction>
    <physiologicalReaction direction="right-to-left" evidence="1">
        <dbReference type="Rhea" id="RHEA:11094"/>
    </physiologicalReaction>
</comment>
<comment type="catalytic activity">
    <reaction evidence="1">
        <text>sn-glycerol 3-phosphate + NADP(+) = dihydroxyacetone phosphate + NADPH + H(+)</text>
        <dbReference type="Rhea" id="RHEA:11096"/>
        <dbReference type="ChEBI" id="CHEBI:15378"/>
        <dbReference type="ChEBI" id="CHEBI:57597"/>
        <dbReference type="ChEBI" id="CHEBI:57642"/>
        <dbReference type="ChEBI" id="CHEBI:57783"/>
        <dbReference type="ChEBI" id="CHEBI:58349"/>
        <dbReference type="EC" id="1.1.1.94"/>
    </reaction>
    <physiologicalReaction direction="right-to-left" evidence="1">
        <dbReference type="Rhea" id="RHEA:11098"/>
    </physiologicalReaction>
</comment>
<comment type="pathway">
    <text evidence="1">Membrane lipid metabolism; glycerophospholipid metabolism.</text>
</comment>
<comment type="subcellular location">
    <subcellularLocation>
        <location evidence="1">Cytoplasm</location>
    </subcellularLocation>
</comment>
<comment type="similarity">
    <text evidence="1">Belongs to the NAD-dependent glycerol-3-phosphate dehydrogenase family.</text>
</comment>
<comment type="sequence caution" evidence="2">
    <conflict type="erroneous initiation">
        <sequence resource="EMBL-CDS" id="BAA17053"/>
    </conflict>
</comment>
<accession>P73033</accession>
<protein>
    <recommendedName>
        <fullName evidence="1">Glycerol-3-phosphate dehydrogenase [NAD(P)+]</fullName>
        <ecNumber evidence="1">1.1.1.94</ecNumber>
    </recommendedName>
    <alternativeName>
        <fullName evidence="1">NAD(P)(+)-dependent glycerol-3-phosphate dehydrogenase</fullName>
    </alternativeName>
    <alternativeName>
        <fullName evidence="1">NAD(P)H-dependent dihydroxyacetone-phosphate reductase</fullName>
    </alternativeName>
</protein>
<organism>
    <name type="scientific">Synechocystis sp. (strain ATCC 27184 / PCC 6803 / Kazusa)</name>
    <dbReference type="NCBI Taxonomy" id="1111708"/>
    <lineage>
        <taxon>Bacteria</taxon>
        <taxon>Bacillati</taxon>
        <taxon>Cyanobacteriota</taxon>
        <taxon>Cyanophyceae</taxon>
        <taxon>Synechococcales</taxon>
        <taxon>Merismopediaceae</taxon>
        <taxon>Synechocystis</taxon>
    </lineage>
</organism>
<reference key="1">
    <citation type="journal article" date="1996" name="DNA Res.">
        <title>Sequence analysis of the genome of the unicellular cyanobacterium Synechocystis sp. strain PCC6803. II. Sequence determination of the entire genome and assignment of potential protein-coding regions.</title>
        <authorList>
            <person name="Kaneko T."/>
            <person name="Sato S."/>
            <person name="Kotani H."/>
            <person name="Tanaka A."/>
            <person name="Asamizu E."/>
            <person name="Nakamura Y."/>
            <person name="Miyajima N."/>
            <person name="Hirosawa M."/>
            <person name="Sugiura M."/>
            <person name="Sasamoto S."/>
            <person name="Kimura T."/>
            <person name="Hosouchi T."/>
            <person name="Matsuno A."/>
            <person name="Muraki A."/>
            <person name="Nakazaki N."/>
            <person name="Naruo K."/>
            <person name="Okumura S."/>
            <person name="Shimpo S."/>
            <person name="Takeuchi C."/>
            <person name="Wada T."/>
            <person name="Watanabe A."/>
            <person name="Yamada M."/>
            <person name="Yasuda M."/>
            <person name="Tabata S."/>
        </authorList>
    </citation>
    <scope>NUCLEOTIDE SEQUENCE [LARGE SCALE GENOMIC DNA]</scope>
    <source>
        <strain>ATCC 27184 / PCC 6803 / Kazusa</strain>
    </source>
</reference>